<keyword id="KW-0963">Cytoplasm</keyword>
<keyword id="KW-0444">Lipid biosynthesis</keyword>
<keyword id="KW-0443">Lipid metabolism</keyword>
<keyword id="KW-0520">NAD</keyword>
<keyword id="KW-0521">NADP</keyword>
<keyword id="KW-0547">Nucleotide-binding</keyword>
<keyword id="KW-0560">Oxidoreductase</keyword>
<keyword id="KW-0594">Phospholipid biosynthesis</keyword>
<keyword id="KW-1208">Phospholipid metabolism</keyword>
<proteinExistence type="inferred from homology"/>
<comment type="function">
    <text evidence="1">Catalyzes the reduction of the glycolytic intermediate dihydroxyacetone phosphate (DHAP) to sn-glycerol 3-phosphate (G3P), the key precursor for phospholipid synthesis.</text>
</comment>
<comment type="catalytic activity">
    <reaction evidence="1">
        <text>sn-glycerol 3-phosphate + NAD(+) = dihydroxyacetone phosphate + NADH + H(+)</text>
        <dbReference type="Rhea" id="RHEA:11092"/>
        <dbReference type="ChEBI" id="CHEBI:15378"/>
        <dbReference type="ChEBI" id="CHEBI:57540"/>
        <dbReference type="ChEBI" id="CHEBI:57597"/>
        <dbReference type="ChEBI" id="CHEBI:57642"/>
        <dbReference type="ChEBI" id="CHEBI:57945"/>
        <dbReference type="EC" id="1.1.1.94"/>
    </reaction>
    <physiologicalReaction direction="right-to-left" evidence="1">
        <dbReference type="Rhea" id="RHEA:11094"/>
    </physiologicalReaction>
</comment>
<comment type="catalytic activity">
    <reaction evidence="1">
        <text>sn-glycerol 3-phosphate + NADP(+) = dihydroxyacetone phosphate + NADPH + H(+)</text>
        <dbReference type="Rhea" id="RHEA:11096"/>
        <dbReference type="ChEBI" id="CHEBI:15378"/>
        <dbReference type="ChEBI" id="CHEBI:57597"/>
        <dbReference type="ChEBI" id="CHEBI:57642"/>
        <dbReference type="ChEBI" id="CHEBI:57783"/>
        <dbReference type="ChEBI" id="CHEBI:58349"/>
        <dbReference type="EC" id="1.1.1.94"/>
    </reaction>
    <physiologicalReaction direction="right-to-left" evidence="1">
        <dbReference type="Rhea" id="RHEA:11098"/>
    </physiologicalReaction>
</comment>
<comment type="pathway">
    <text evidence="1">Membrane lipid metabolism; glycerophospholipid metabolism.</text>
</comment>
<comment type="subcellular location">
    <subcellularLocation>
        <location evidence="1">Cytoplasm</location>
    </subcellularLocation>
</comment>
<comment type="similarity">
    <text evidence="1">Belongs to the NAD-dependent glycerol-3-phosphate dehydrogenase family.</text>
</comment>
<gene>
    <name evidence="1" type="primary">gpsA</name>
    <name type="ordered locus">lin2050</name>
</gene>
<reference key="1">
    <citation type="journal article" date="2001" name="Science">
        <title>Comparative genomics of Listeria species.</title>
        <authorList>
            <person name="Glaser P."/>
            <person name="Frangeul L."/>
            <person name="Buchrieser C."/>
            <person name="Rusniok C."/>
            <person name="Amend A."/>
            <person name="Baquero F."/>
            <person name="Berche P."/>
            <person name="Bloecker H."/>
            <person name="Brandt P."/>
            <person name="Chakraborty T."/>
            <person name="Charbit A."/>
            <person name="Chetouani F."/>
            <person name="Couve E."/>
            <person name="de Daruvar A."/>
            <person name="Dehoux P."/>
            <person name="Domann E."/>
            <person name="Dominguez-Bernal G."/>
            <person name="Duchaud E."/>
            <person name="Durant L."/>
            <person name="Dussurget O."/>
            <person name="Entian K.-D."/>
            <person name="Fsihi H."/>
            <person name="Garcia-del Portillo F."/>
            <person name="Garrido P."/>
            <person name="Gautier L."/>
            <person name="Goebel W."/>
            <person name="Gomez-Lopez N."/>
            <person name="Hain T."/>
            <person name="Hauf J."/>
            <person name="Jackson D."/>
            <person name="Jones L.-M."/>
            <person name="Kaerst U."/>
            <person name="Kreft J."/>
            <person name="Kuhn M."/>
            <person name="Kunst F."/>
            <person name="Kurapkat G."/>
            <person name="Madueno E."/>
            <person name="Maitournam A."/>
            <person name="Mata Vicente J."/>
            <person name="Ng E."/>
            <person name="Nedjari H."/>
            <person name="Nordsiek G."/>
            <person name="Novella S."/>
            <person name="de Pablos B."/>
            <person name="Perez-Diaz J.-C."/>
            <person name="Purcell R."/>
            <person name="Remmel B."/>
            <person name="Rose M."/>
            <person name="Schlueter T."/>
            <person name="Simoes N."/>
            <person name="Tierrez A."/>
            <person name="Vazquez-Boland J.-A."/>
            <person name="Voss H."/>
            <person name="Wehland J."/>
            <person name="Cossart P."/>
        </authorList>
    </citation>
    <scope>NUCLEOTIDE SEQUENCE [LARGE SCALE GENOMIC DNA]</scope>
    <source>
        <strain>ATCC BAA-680 / CLIP 11262</strain>
    </source>
</reference>
<organism>
    <name type="scientific">Listeria innocua serovar 6a (strain ATCC BAA-680 / CLIP 11262)</name>
    <dbReference type="NCBI Taxonomy" id="272626"/>
    <lineage>
        <taxon>Bacteria</taxon>
        <taxon>Bacillati</taxon>
        <taxon>Bacillota</taxon>
        <taxon>Bacilli</taxon>
        <taxon>Bacillales</taxon>
        <taxon>Listeriaceae</taxon>
        <taxon>Listeria</taxon>
    </lineage>
</organism>
<accession>Q92A72</accession>
<name>GPDA_LISIN</name>
<sequence length="338" mass="36539">MTQKKVAILGAGSWGTGLALVLADNNHKPVIWGNLDKIVNEINESHTNSHYLPDIILPTEVKATLSLDEAIDGAEIVVIAIPTNAMRVVCKQLNEALKEPTILVHVSKGIEPETNLRMSEVIEEEVDATKRKALVVLSGPSHAEEVALRHPTTLCASCKDLKAAEIVQDRFINNNLRIYTNDDVIGAEIGGALKNIIALGAGISDGLGYGDNAKAALMTRGMAEITRLGVAVGSNPQTFYGLTGIGDLIVTCTSVHSRNWRAGNMLGKGENLDEVLEKMGMVVEGVRTAKAVHGWAKKLDIDMPITESIYAILFENKDAREAVDLLMGRKKKIEKESF</sequence>
<feature type="chain" id="PRO_0000137983" description="Glycerol-3-phosphate dehydrogenase [NAD(P)+]">
    <location>
        <begin position="1"/>
        <end position="338"/>
    </location>
</feature>
<feature type="active site" description="Proton acceptor" evidence="1">
    <location>
        <position position="194"/>
    </location>
</feature>
<feature type="binding site" evidence="1">
    <location>
        <position position="13"/>
    </location>
    <ligand>
        <name>NADPH</name>
        <dbReference type="ChEBI" id="CHEBI:57783"/>
    </ligand>
</feature>
<feature type="binding site" evidence="1">
    <location>
        <position position="14"/>
    </location>
    <ligand>
        <name>NADPH</name>
        <dbReference type="ChEBI" id="CHEBI:57783"/>
    </ligand>
</feature>
<feature type="binding site" evidence="1">
    <location>
        <position position="108"/>
    </location>
    <ligand>
        <name>NADPH</name>
        <dbReference type="ChEBI" id="CHEBI:57783"/>
    </ligand>
</feature>
<feature type="binding site" evidence="1">
    <location>
        <position position="108"/>
    </location>
    <ligand>
        <name>sn-glycerol 3-phosphate</name>
        <dbReference type="ChEBI" id="CHEBI:57597"/>
    </ligand>
</feature>
<feature type="binding site" evidence="1">
    <location>
        <position position="139"/>
    </location>
    <ligand>
        <name>sn-glycerol 3-phosphate</name>
        <dbReference type="ChEBI" id="CHEBI:57597"/>
    </ligand>
</feature>
<feature type="binding site" evidence="1">
    <location>
        <position position="141"/>
    </location>
    <ligand>
        <name>sn-glycerol 3-phosphate</name>
        <dbReference type="ChEBI" id="CHEBI:57597"/>
    </ligand>
</feature>
<feature type="binding site" evidence="1">
    <location>
        <position position="143"/>
    </location>
    <ligand>
        <name>NADPH</name>
        <dbReference type="ChEBI" id="CHEBI:57783"/>
    </ligand>
</feature>
<feature type="binding site" evidence="1">
    <location>
        <position position="194"/>
    </location>
    <ligand>
        <name>sn-glycerol 3-phosphate</name>
        <dbReference type="ChEBI" id="CHEBI:57597"/>
    </ligand>
</feature>
<feature type="binding site" evidence="1">
    <location>
        <position position="247"/>
    </location>
    <ligand>
        <name>sn-glycerol 3-phosphate</name>
        <dbReference type="ChEBI" id="CHEBI:57597"/>
    </ligand>
</feature>
<feature type="binding site" evidence="1">
    <location>
        <position position="257"/>
    </location>
    <ligand>
        <name>sn-glycerol 3-phosphate</name>
        <dbReference type="ChEBI" id="CHEBI:57597"/>
    </ligand>
</feature>
<feature type="binding site" evidence="1">
    <location>
        <position position="258"/>
    </location>
    <ligand>
        <name>NADPH</name>
        <dbReference type="ChEBI" id="CHEBI:57783"/>
    </ligand>
</feature>
<feature type="binding site" evidence="1">
    <location>
        <position position="258"/>
    </location>
    <ligand>
        <name>sn-glycerol 3-phosphate</name>
        <dbReference type="ChEBI" id="CHEBI:57597"/>
    </ligand>
</feature>
<feature type="binding site" evidence="1">
    <location>
        <position position="259"/>
    </location>
    <ligand>
        <name>sn-glycerol 3-phosphate</name>
        <dbReference type="ChEBI" id="CHEBI:57597"/>
    </ligand>
</feature>
<feature type="binding site" evidence="1">
    <location>
        <position position="282"/>
    </location>
    <ligand>
        <name>NADPH</name>
        <dbReference type="ChEBI" id="CHEBI:57783"/>
    </ligand>
</feature>
<feature type="binding site" evidence="1">
    <location>
        <position position="284"/>
    </location>
    <ligand>
        <name>NADPH</name>
        <dbReference type="ChEBI" id="CHEBI:57783"/>
    </ligand>
</feature>
<protein>
    <recommendedName>
        <fullName evidence="1">Glycerol-3-phosphate dehydrogenase [NAD(P)+]</fullName>
        <ecNumber evidence="1">1.1.1.94</ecNumber>
    </recommendedName>
    <alternativeName>
        <fullName evidence="1">NAD(P)(+)-dependent glycerol-3-phosphate dehydrogenase</fullName>
    </alternativeName>
    <alternativeName>
        <fullName evidence="1">NAD(P)H-dependent dihydroxyacetone-phosphate reductase</fullName>
    </alternativeName>
</protein>
<dbReference type="EC" id="1.1.1.94" evidence="1"/>
<dbReference type="EMBL" id="AL596170">
    <property type="protein sequence ID" value="CAC97280.1"/>
    <property type="molecule type" value="Genomic_DNA"/>
</dbReference>
<dbReference type="PIR" id="AH1688">
    <property type="entry name" value="AH1688"/>
</dbReference>
<dbReference type="RefSeq" id="WP_003763132.1">
    <property type="nucleotide sequence ID" value="NC_003212.1"/>
</dbReference>
<dbReference type="SMR" id="Q92A72"/>
<dbReference type="STRING" id="272626.gene:17566408"/>
<dbReference type="KEGG" id="lin:gpsA"/>
<dbReference type="eggNOG" id="COG0240">
    <property type="taxonomic scope" value="Bacteria"/>
</dbReference>
<dbReference type="HOGENOM" id="CLU_033449_0_2_9"/>
<dbReference type="OrthoDB" id="9812273at2"/>
<dbReference type="UniPathway" id="UPA00940"/>
<dbReference type="Proteomes" id="UP000002513">
    <property type="component" value="Chromosome"/>
</dbReference>
<dbReference type="GO" id="GO:0005829">
    <property type="term" value="C:cytosol"/>
    <property type="evidence" value="ECO:0007669"/>
    <property type="project" value="TreeGrafter"/>
</dbReference>
<dbReference type="GO" id="GO:0047952">
    <property type="term" value="F:glycerol-3-phosphate dehydrogenase [NAD(P)+] activity"/>
    <property type="evidence" value="ECO:0007669"/>
    <property type="project" value="UniProtKB-UniRule"/>
</dbReference>
<dbReference type="GO" id="GO:0051287">
    <property type="term" value="F:NAD binding"/>
    <property type="evidence" value="ECO:0007669"/>
    <property type="project" value="InterPro"/>
</dbReference>
<dbReference type="GO" id="GO:0005975">
    <property type="term" value="P:carbohydrate metabolic process"/>
    <property type="evidence" value="ECO:0007669"/>
    <property type="project" value="InterPro"/>
</dbReference>
<dbReference type="GO" id="GO:0046167">
    <property type="term" value="P:glycerol-3-phosphate biosynthetic process"/>
    <property type="evidence" value="ECO:0007669"/>
    <property type="project" value="UniProtKB-UniRule"/>
</dbReference>
<dbReference type="GO" id="GO:0046168">
    <property type="term" value="P:glycerol-3-phosphate catabolic process"/>
    <property type="evidence" value="ECO:0007669"/>
    <property type="project" value="InterPro"/>
</dbReference>
<dbReference type="GO" id="GO:0006650">
    <property type="term" value="P:glycerophospholipid metabolic process"/>
    <property type="evidence" value="ECO:0007669"/>
    <property type="project" value="UniProtKB-UniRule"/>
</dbReference>
<dbReference type="GO" id="GO:0008654">
    <property type="term" value="P:phospholipid biosynthetic process"/>
    <property type="evidence" value="ECO:0007669"/>
    <property type="project" value="UniProtKB-KW"/>
</dbReference>
<dbReference type="FunFam" id="1.10.1040.10:FF:000001">
    <property type="entry name" value="Glycerol-3-phosphate dehydrogenase [NAD(P)+]"/>
    <property type="match status" value="1"/>
</dbReference>
<dbReference type="FunFam" id="3.40.50.720:FF:000019">
    <property type="entry name" value="Glycerol-3-phosphate dehydrogenase [NAD(P)+]"/>
    <property type="match status" value="1"/>
</dbReference>
<dbReference type="Gene3D" id="1.10.1040.10">
    <property type="entry name" value="N-(1-d-carboxylethyl)-l-norvaline Dehydrogenase, domain 2"/>
    <property type="match status" value="1"/>
</dbReference>
<dbReference type="Gene3D" id="3.40.50.720">
    <property type="entry name" value="NAD(P)-binding Rossmann-like Domain"/>
    <property type="match status" value="1"/>
</dbReference>
<dbReference type="HAMAP" id="MF_00394">
    <property type="entry name" value="NAD_Glyc3P_dehydrog"/>
    <property type="match status" value="1"/>
</dbReference>
<dbReference type="InterPro" id="IPR008927">
    <property type="entry name" value="6-PGluconate_DH-like_C_sf"/>
</dbReference>
<dbReference type="InterPro" id="IPR013328">
    <property type="entry name" value="6PGD_dom2"/>
</dbReference>
<dbReference type="InterPro" id="IPR006168">
    <property type="entry name" value="G3P_DH_NAD-dep"/>
</dbReference>
<dbReference type="InterPro" id="IPR006109">
    <property type="entry name" value="G3P_DH_NAD-dep_C"/>
</dbReference>
<dbReference type="InterPro" id="IPR011128">
    <property type="entry name" value="G3P_DH_NAD-dep_N"/>
</dbReference>
<dbReference type="InterPro" id="IPR036291">
    <property type="entry name" value="NAD(P)-bd_dom_sf"/>
</dbReference>
<dbReference type="NCBIfam" id="NF000940">
    <property type="entry name" value="PRK00094.1-2"/>
    <property type="match status" value="1"/>
</dbReference>
<dbReference type="NCBIfam" id="NF000941">
    <property type="entry name" value="PRK00094.1-3"/>
    <property type="match status" value="1"/>
</dbReference>
<dbReference type="NCBIfam" id="NF000942">
    <property type="entry name" value="PRK00094.1-4"/>
    <property type="match status" value="1"/>
</dbReference>
<dbReference type="PANTHER" id="PTHR11728">
    <property type="entry name" value="GLYCEROL-3-PHOSPHATE DEHYDROGENASE"/>
    <property type="match status" value="1"/>
</dbReference>
<dbReference type="PANTHER" id="PTHR11728:SF1">
    <property type="entry name" value="GLYCEROL-3-PHOSPHATE DEHYDROGENASE [NAD(+)] 2, CHLOROPLASTIC"/>
    <property type="match status" value="1"/>
</dbReference>
<dbReference type="Pfam" id="PF07479">
    <property type="entry name" value="NAD_Gly3P_dh_C"/>
    <property type="match status" value="1"/>
</dbReference>
<dbReference type="Pfam" id="PF01210">
    <property type="entry name" value="NAD_Gly3P_dh_N"/>
    <property type="match status" value="1"/>
</dbReference>
<dbReference type="PIRSF" id="PIRSF000114">
    <property type="entry name" value="Glycerol-3-P_dh"/>
    <property type="match status" value="1"/>
</dbReference>
<dbReference type="PRINTS" id="PR00077">
    <property type="entry name" value="GPDHDRGNASE"/>
</dbReference>
<dbReference type="SUPFAM" id="SSF48179">
    <property type="entry name" value="6-phosphogluconate dehydrogenase C-terminal domain-like"/>
    <property type="match status" value="1"/>
</dbReference>
<dbReference type="SUPFAM" id="SSF51735">
    <property type="entry name" value="NAD(P)-binding Rossmann-fold domains"/>
    <property type="match status" value="1"/>
</dbReference>
<dbReference type="PROSITE" id="PS00957">
    <property type="entry name" value="NAD_G3PDH"/>
    <property type="match status" value="1"/>
</dbReference>
<evidence type="ECO:0000255" key="1">
    <source>
        <dbReference type="HAMAP-Rule" id="MF_00394"/>
    </source>
</evidence>